<accession>P9WJJ2</accession>
<accession>L0T9M3</accession>
<accession>P0A5L6</accession>
<accession>P71911</accession>
<evidence type="ECO:0000255" key="1">
    <source>
        <dbReference type="HAMAP-Rule" id="MF_02090"/>
    </source>
</evidence>
<evidence type="ECO:0000255" key="2">
    <source>
        <dbReference type="PROSITE-ProRule" id="PRU00054"/>
    </source>
</evidence>
<evidence type="ECO:0000256" key="3">
    <source>
        <dbReference type="SAM" id="MobiDB-lite"/>
    </source>
</evidence>
<evidence type="ECO:0000305" key="4"/>
<sequence>MNFYSAYQHGFVRVAACTHHTTIGDPAANAASVLDMARACHDDGAALAVFPELTLSGYSIEDVLLQDSLLDAVEDALLDLVTESADLLPVLVVGAPLRHRHRIYNTAVVIHRGAVLGVVPKSYLPTYREFYERRQMAPGDGERGTIRIGGADVAFGTDLLFAASDLPGFVLHVEICEDMFVPMPPSAEAALAGATVLANLSGSPITIGRAEDRRLLARSASARCLAAYVYAAAGEGESTTDLAWDGQTMIWENGALLAESERFPKGVRRSVADVDTELLRSERLRMGTFDDNRRHHRELTESFRRIDFALDPPAGDIGLLREVERFPFVPADPQRLQQDCYEAYNIQVSGLEQRLRALDYPKVVIGVSGGLDSTHALIVATHAMDREGRPRSDILAFALPGFATGEHTKNNAIKLARALGVTFSEIDIGDTARLMLHTIGHPYSVGEKVYDVTFENVQAGLRTDYLFRIANQRGGIVLGTGDLSELALGWSTYGVGDQMSHYNVNAGVPKTLIQHLIRWVISAGEFGEKVGEVLQSVLDTEITPELIPTGEEELQSSEAKVGPFALQDFSLFQVLRYGFRPSKIAFLAWHAWNDAERGNWPPGFPKSERPSYSLAEIRHWLQIFVQRFYSFSQFKRSALPNGPKVSHGGALSPRGDWRAPSDMSARIWLDQIDREVPKG</sequence>
<organism>
    <name type="scientific">Mycobacterium tuberculosis (strain CDC 1551 / Oshkosh)</name>
    <dbReference type="NCBI Taxonomy" id="83331"/>
    <lineage>
        <taxon>Bacteria</taxon>
        <taxon>Bacillati</taxon>
        <taxon>Actinomycetota</taxon>
        <taxon>Actinomycetes</taxon>
        <taxon>Mycobacteriales</taxon>
        <taxon>Mycobacteriaceae</taxon>
        <taxon>Mycobacterium</taxon>
        <taxon>Mycobacterium tuberculosis complex</taxon>
    </lineage>
</organism>
<protein>
    <recommendedName>
        <fullName evidence="1">Glutamine-dependent NAD(+) synthetase</fullName>
        <ecNumber evidence="1">6.3.5.1</ecNumber>
    </recommendedName>
    <alternativeName>
        <fullName evidence="1">NAD(+) synthase [glutamine-hydrolyzing]</fullName>
    </alternativeName>
</protein>
<feature type="chain" id="PRO_0000427820" description="Glutamine-dependent NAD(+) synthetase">
    <location>
        <begin position="1"/>
        <end position="679"/>
    </location>
</feature>
<feature type="domain" description="CN hydrolase" evidence="2">
    <location>
        <begin position="12"/>
        <end position="276"/>
    </location>
</feature>
<feature type="region of interest" description="Ligase">
    <location>
        <begin position="337"/>
        <end position="679"/>
    </location>
</feature>
<feature type="region of interest" description="Disordered" evidence="3">
    <location>
        <begin position="639"/>
        <end position="658"/>
    </location>
</feature>
<feature type="active site" description="Proton acceptor; for glutaminase activity" evidence="1">
    <location>
        <position position="52"/>
    </location>
</feature>
<feature type="active site" description="For glutaminase activity" evidence="1">
    <location>
        <position position="121"/>
    </location>
</feature>
<feature type="active site" description="Nucleophile; for glutaminase activity" evidence="1">
    <location>
        <position position="176"/>
    </location>
</feature>
<feature type="binding site" evidence="1">
    <location>
        <position position="127"/>
    </location>
    <ligand>
        <name>L-glutamine</name>
        <dbReference type="ChEBI" id="CHEBI:58359"/>
    </ligand>
</feature>
<feature type="binding site" evidence="1">
    <location>
        <position position="203"/>
    </location>
    <ligand>
        <name>L-glutamine</name>
        <dbReference type="ChEBI" id="CHEBI:58359"/>
    </ligand>
</feature>
<feature type="binding site" evidence="1">
    <location>
        <position position="209"/>
    </location>
    <ligand>
        <name>L-glutamine</name>
        <dbReference type="ChEBI" id="CHEBI:58359"/>
    </ligand>
</feature>
<feature type="binding site" evidence="1">
    <location>
        <begin position="366"/>
        <end position="373"/>
    </location>
    <ligand>
        <name>ATP</name>
        <dbReference type="ChEBI" id="CHEBI:30616"/>
    </ligand>
</feature>
<feature type="binding site" evidence="1">
    <location>
        <position position="456"/>
    </location>
    <ligand>
        <name>deamido-NAD(+)</name>
        <dbReference type="ChEBI" id="CHEBI:58437"/>
    </ligand>
</feature>
<feature type="binding site" evidence="1">
    <location>
        <position position="480"/>
    </location>
    <ligand>
        <name>ATP</name>
        <dbReference type="ChEBI" id="CHEBI:30616"/>
    </ligand>
</feature>
<feature type="binding site" evidence="1">
    <location>
        <position position="485"/>
    </location>
    <ligand>
        <name>deamido-NAD(+)</name>
        <dbReference type="ChEBI" id="CHEBI:58437"/>
    </ligand>
</feature>
<feature type="binding site" evidence="1">
    <location>
        <begin position="490"/>
        <end position="493"/>
    </location>
    <ligand>
        <name>deamido-NAD(+)</name>
        <dbReference type="ChEBI" id="CHEBI:58437"/>
    </ligand>
</feature>
<feature type="binding site" evidence="1">
    <location>
        <position position="635"/>
    </location>
    <ligand>
        <name>deamido-NAD(+)</name>
        <dbReference type="ChEBI" id="CHEBI:58437"/>
    </ligand>
</feature>
<proteinExistence type="inferred from homology"/>
<comment type="function">
    <text evidence="1">Catalyzes the ATP-dependent amidation of deamido-NAD to form NAD. Uses L-glutamine as a nitrogen source.</text>
</comment>
<comment type="catalytic activity">
    <reaction evidence="1">
        <text>deamido-NAD(+) + L-glutamine + ATP + H2O = L-glutamate + AMP + diphosphate + NAD(+) + H(+)</text>
        <dbReference type="Rhea" id="RHEA:24384"/>
        <dbReference type="ChEBI" id="CHEBI:15377"/>
        <dbReference type="ChEBI" id="CHEBI:15378"/>
        <dbReference type="ChEBI" id="CHEBI:29985"/>
        <dbReference type="ChEBI" id="CHEBI:30616"/>
        <dbReference type="ChEBI" id="CHEBI:33019"/>
        <dbReference type="ChEBI" id="CHEBI:57540"/>
        <dbReference type="ChEBI" id="CHEBI:58359"/>
        <dbReference type="ChEBI" id="CHEBI:58437"/>
        <dbReference type="ChEBI" id="CHEBI:456215"/>
        <dbReference type="EC" id="6.3.5.1"/>
    </reaction>
</comment>
<comment type="pathway">
    <text evidence="1">Cofactor biosynthesis; NAD(+) biosynthesis; NAD(+) from deamido-NAD(+) (L-Gln route): step 1/1.</text>
</comment>
<comment type="similarity">
    <text evidence="1 4">In the C-terminal section; belongs to the NAD synthetase family.</text>
</comment>
<comment type="sequence caution" evidence="4">
    <conflict type="erroneous initiation">
        <sequence resource="EMBL-CDS" id="AAK46810"/>
    </conflict>
</comment>
<dbReference type="EC" id="6.3.5.1" evidence="1"/>
<dbReference type="EMBL" id="AE000516">
    <property type="protein sequence ID" value="AAK46810.1"/>
    <property type="status" value="ALT_INIT"/>
    <property type="molecule type" value="Genomic_DNA"/>
</dbReference>
<dbReference type="PIR" id="D70680">
    <property type="entry name" value="D70680"/>
</dbReference>
<dbReference type="SMR" id="P9WJJ2"/>
<dbReference type="KEGG" id="mtc:MT2513"/>
<dbReference type="PATRIC" id="fig|83331.31.peg.2712"/>
<dbReference type="HOGENOM" id="CLU_025662_0_0_11"/>
<dbReference type="UniPathway" id="UPA00253">
    <property type="reaction ID" value="UER00334"/>
</dbReference>
<dbReference type="Proteomes" id="UP000001020">
    <property type="component" value="Chromosome"/>
</dbReference>
<dbReference type="GO" id="GO:0005737">
    <property type="term" value="C:cytoplasm"/>
    <property type="evidence" value="ECO:0007669"/>
    <property type="project" value="InterPro"/>
</dbReference>
<dbReference type="GO" id="GO:0005524">
    <property type="term" value="F:ATP binding"/>
    <property type="evidence" value="ECO:0007669"/>
    <property type="project" value="UniProtKB-UniRule"/>
</dbReference>
<dbReference type="GO" id="GO:0004359">
    <property type="term" value="F:glutaminase activity"/>
    <property type="evidence" value="ECO:0007669"/>
    <property type="project" value="InterPro"/>
</dbReference>
<dbReference type="GO" id="GO:0003952">
    <property type="term" value="F:NAD+ synthase (glutamine-hydrolyzing) activity"/>
    <property type="evidence" value="ECO:0007669"/>
    <property type="project" value="UniProtKB-EC"/>
</dbReference>
<dbReference type="GO" id="GO:0008795">
    <property type="term" value="F:NAD+ synthase activity"/>
    <property type="evidence" value="ECO:0007669"/>
    <property type="project" value="UniProtKB-UniRule"/>
</dbReference>
<dbReference type="GO" id="GO:0009435">
    <property type="term" value="P:NAD biosynthetic process"/>
    <property type="evidence" value="ECO:0007669"/>
    <property type="project" value="UniProtKB-UniRule"/>
</dbReference>
<dbReference type="CDD" id="cd07570">
    <property type="entry name" value="GAT_Gln-NAD-synth"/>
    <property type="match status" value="1"/>
</dbReference>
<dbReference type="CDD" id="cd00553">
    <property type="entry name" value="NAD_synthase"/>
    <property type="match status" value="1"/>
</dbReference>
<dbReference type="FunFam" id="1.10.10.1140:FF:000001">
    <property type="entry name" value="Glutamine-dependent NAD(+) synthetase"/>
    <property type="match status" value="1"/>
</dbReference>
<dbReference type="FunFam" id="3.40.50.620:FF:000155">
    <property type="entry name" value="Glutamine-dependent NAD(+) synthetase"/>
    <property type="match status" value="1"/>
</dbReference>
<dbReference type="FunFam" id="3.60.110.10:FF:000020">
    <property type="entry name" value="Glutamine-dependent NAD(+) synthetase"/>
    <property type="match status" value="1"/>
</dbReference>
<dbReference type="Gene3D" id="3.60.110.10">
    <property type="entry name" value="Carbon-nitrogen hydrolase"/>
    <property type="match status" value="1"/>
</dbReference>
<dbReference type="Gene3D" id="1.10.10.1140">
    <property type="entry name" value="Glutamine-dependent NAD+ synthetase, C-terminal domain"/>
    <property type="match status" value="1"/>
</dbReference>
<dbReference type="Gene3D" id="3.40.50.620">
    <property type="entry name" value="HUPs"/>
    <property type="match status" value="1"/>
</dbReference>
<dbReference type="HAMAP" id="MF_02090">
    <property type="entry name" value="NadE_glutamine_dep"/>
    <property type="match status" value="1"/>
</dbReference>
<dbReference type="InterPro" id="IPR003010">
    <property type="entry name" value="C-N_Hydrolase"/>
</dbReference>
<dbReference type="InterPro" id="IPR036526">
    <property type="entry name" value="C-N_Hydrolase_sf"/>
</dbReference>
<dbReference type="InterPro" id="IPR014445">
    <property type="entry name" value="Gln-dep_NAD_synthase"/>
</dbReference>
<dbReference type="InterPro" id="IPR041856">
    <property type="entry name" value="NAD+_synth_C"/>
</dbReference>
<dbReference type="InterPro" id="IPR022310">
    <property type="entry name" value="NAD/GMP_synthase"/>
</dbReference>
<dbReference type="InterPro" id="IPR003694">
    <property type="entry name" value="NAD_synthase"/>
</dbReference>
<dbReference type="InterPro" id="IPR014729">
    <property type="entry name" value="Rossmann-like_a/b/a_fold"/>
</dbReference>
<dbReference type="NCBIfam" id="NF002730">
    <property type="entry name" value="PRK02628.1"/>
    <property type="match status" value="1"/>
</dbReference>
<dbReference type="PANTHER" id="PTHR23090:SF9">
    <property type="entry name" value="GLUTAMINE-DEPENDENT NAD(+) SYNTHETASE"/>
    <property type="match status" value="1"/>
</dbReference>
<dbReference type="PANTHER" id="PTHR23090">
    <property type="entry name" value="NH 3 /GLUTAMINE-DEPENDENT NAD + SYNTHETASE"/>
    <property type="match status" value="1"/>
</dbReference>
<dbReference type="Pfam" id="PF00795">
    <property type="entry name" value="CN_hydrolase"/>
    <property type="match status" value="1"/>
</dbReference>
<dbReference type="Pfam" id="PF02540">
    <property type="entry name" value="NAD_synthase"/>
    <property type="match status" value="1"/>
</dbReference>
<dbReference type="PIRSF" id="PIRSF006630">
    <property type="entry name" value="NADS_GAT"/>
    <property type="match status" value="1"/>
</dbReference>
<dbReference type="SUPFAM" id="SSF52402">
    <property type="entry name" value="Adenine nucleotide alpha hydrolases-like"/>
    <property type="match status" value="1"/>
</dbReference>
<dbReference type="SUPFAM" id="SSF56317">
    <property type="entry name" value="Carbon-nitrogen hydrolase"/>
    <property type="match status" value="1"/>
</dbReference>
<dbReference type="PROSITE" id="PS50263">
    <property type="entry name" value="CN_HYDROLASE"/>
    <property type="match status" value="1"/>
</dbReference>
<gene>
    <name evidence="1" type="primary">nadE</name>
    <name type="ordered locus">MT2513</name>
</gene>
<name>NADE_MYCTO</name>
<reference key="1">
    <citation type="journal article" date="2002" name="J. Bacteriol.">
        <title>Whole-genome comparison of Mycobacterium tuberculosis clinical and laboratory strains.</title>
        <authorList>
            <person name="Fleischmann R.D."/>
            <person name="Alland D."/>
            <person name="Eisen J.A."/>
            <person name="Carpenter L."/>
            <person name="White O."/>
            <person name="Peterson J.D."/>
            <person name="DeBoy R.T."/>
            <person name="Dodson R.J."/>
            <person name="Gwinn M.L."/>
            <person name="Haft D.H."/>
            <person name="Hickey E.K."/>
            <person name="Kolonay J.F."/>
            <person name="Nelson W.C."/>
            <person name="Umayam L.A."/>
            <person name="Ermolaeva M.D."/>
            <person name="Salzberg S.L."/>
            <person name="Delcher A."/>
            <person name="Utterback T.R."/>
            <person name="Weidman J.F."/>
            <person name="Khouri H.M."/>
            <person name="Gill J."/>
            <person name="Mikula A."/>
            <person name="Bishai W."/>
            <person name="Jacobs W.R. Jr."/>
            <person name="Venter J.C."/>
            <person name="Fraser C.M."/>
        </authorList>
    </citation>
    <scope>NUCLEOTIDE SEQUENCE [LARGE SCALE GENOMIC DNA]</scope>
    <source>
        <strain>CDC 1551 / Oshkosh</strain>
    </source>
</reference>
<keyword id="KW-0067">ATP-binding</keyword>
<keyword id="KW-0436">Ligase</keyword>
<keyword id="KW-0520">NAD</keyword>
<keyword id="KW-0547">Nucleotide-binding</keyword>
<keyword id="KW-1185">Reference proteome</keyword>